<protein>
    <recommendedName>
        <fullName evidence="1">ATP-dependent Clp protease proteolytic subunit 4</fullName>
        <ecNumber evidence="1">3.4.21.92</ecNumber>
    </recommendedName>
    <alternativeName>
        <fullName evidence="1">Endopeptidase Clp 4</fullName>
    </alternativeName>
</protein>
<reference key="1">
    <citation type="journal article" date="2001" name="Proc. Natl. Acad. Sci. U.S.A.">
        <title>Genome sequence of an industrial microorganism Streptomyces avermitilis: deducing the ability of producing secondary metabolites.</title>
        <authorList>
            <person name="Omura S."/>
            <person name="Ikeda H."/>
            <person name="Ishikawa J."/>
            <person name="Hanamoto A."/>
            <person name="Takahashi C."/>
            <person name="Shinose M."/>
            <person name="Takahashi Y."/>
            <person name="Horikawa H."/>
            <person name="Nakazawa H."/>
            <person name="Osonoe T."/>
            <person name="Kikuchi H."/>
            <person name="Shiba T."/>
            <person name="Sakaki Y."/>
            <person name="Hattori M."/>
        </authorList>
    </citation>
    <scope>NUCLEOTIDE SEQUENCE [LARGE SCALE GENOMIC DNA]</scope>
    <source>
        <strain>ATCC 31267 / DSM 46492 / JCM 5070 / NBRC 14893 / NCIMB 12804 / NRRL 8165 / MA-4680</strain>
    </source>
</reference>
<reference key="2">
    <citation type="journal article" date="2003" name="Nat. Biotechnol.">
        <title>Complete genome sequence and comparative analysis of the industrial microorganism Streptomyces avermitilis.</title>
        <authorList>
            <person name="Ikeda H."/>
            <person name="Ishikawa J."/>
            <person name="Hanamoto A."/>
            <person name="Shinose M."/>
            <person name="Kikuchi H."/>
            <person name="Shiba T."/>
            <person name="Sakaki Y."/>
            <person name="Hattori M."/>
            <person name="Omura S."/>
        </authorList>
    </citation>
    <scope>NUCLEOTIDE SEQUENCE [LARGE SCALE GENOMIC DNA]</scope>
    <source>
        <strain>ATCC 31267 / DSM 46492 / JCM 5070 / NBRC 14893 / NCIMB 12804 / NRRL 8165 / MA-4680</strain>
    </source>
</reference>
<name>CLPP4_STRAW</name>
<gene>
    <name evidence="1" type="primary">clpP4</name>
    <name type="ordered locus">SAV_5448</name>
</gene>
<proteinExistence type="inferred from homology"/>
<keyword id="KW-0963">Cytoplasm</keyword>
<keyword id="KW-0378">Hydrolase</keyword>
<keyword id="KW-0645">Protease</keyword>
<keyword id="KW-1185">Reference proteome</keyword>
<keyword id="KW-0720">Serine protease</keyword>
<organism>
    <name type="scientific">Streptomyces avermitilis (strain ATCC 31267 / DSM 46492 / JCM 5070 / NBRC 14893 / NCIMB 12804 / NRRL 8165 / MA-4680)</name>
    <dbReference type="NCBI Taxonomy" id="227882"/>
    <lineage>
        <taxon>Bacteria</taxon>
        <taxon>Bacillati</taxon>
        <taxon>Actinomycetota</taxon>
        <taxon>Actinomycetes</taxon>
        <taxon>Kitasatosporales</taxon>
        <taxon>Streptomycetaceae</taxon>
        <taxon>Streptomyces</taxon>
    </lineage>
</organism>
<dbReference type="EC" id="3.4.21.92" evidence="1"/>
<dbReference type="EMBL" id="BA000030">
    <property type="protein sequence ID" value="BAC73160.1"/>
    <property type="molecule type" value="Genomic_DNA"/>
</dbReference>
<dbReference type="RefSeq" id="WP_010986850.1">
    <property type="nucleotide sequence ID" value="NZ_JZJK01000066.1"/>
</dbReference>
<dbReference type="SMR" id="Q82CA5"/>
<dbReference type="MEROPS" id="S14.009"/>
<dbReference type="GeneID" id="41542540"/>
<dbReference type="KEGG" id="sma:SAVERM_5448"/>
<dbReference type="eggNOG" id="COG0740">
    <property type="taxonomic scope" value="Bacteria"/>
</dbReference>
<dbReference type="HOGENOM" id="CLU_058707_3_2_11"/>
<dbReference type="OrthoDB" id="9802800at2"/>
<dbReference type="Proteomes" id="UP000000428">
    <property type="component" value="Chromosome"/>
</dbReference>
<dbReference type="GO" id="GO:0005737">
    <property type="term" value="C:cytoplasm"/>
    <property type="evidence" value="ECO:0007669"/>
    <property type="project" value="UniProtKB-SubCell"/>
</dbReference>
<dbReference type="GO" id="GO:0009368">
    <property type="term" value="C:endopeptidase Clp complex"/>
    <property type="evidence" value="ECO:0007669"/>
    <property type="project" value="TreeGrafter"/>
</dbReference>
<dbReference type="GO" id="GO:0004176">
    <property type="term" value="F:ATP-dependent peptidase activity"/>
    <property type="evidence" value="ECO:0007669"/>
    <property type="project" value="InterPro"/>
</dbReference>
<dbReference type="GO" id="GO:0051117">
    <property type="term" value="F:ATPase binding"/>
    <property type="evidence" value="ECO:0007669"/>
    <property type="project" value="TreeGrafter"/>
</dbReference>
<dbReference type="GO" id="GO:0004252">
    <property type="term" value="F:serine-type endopeptidase activity"/>
    <property type="evidence" value="ECO:0007669"/>
    <property type="project" value="UniProtKB-UniRule"/>
</dbReference>
<dbReference type="GO" id="GO:0006515">
    <property type="term" value="P:protein quality control for misfolded or incompletely synthesized proteins"/>
    <property type="evidence" value="ECO:0007669"/>
    <property type="project" value="TreeGrafter"/>
</dbReference>
<dbReference type="CDD" id="cd07017">
    <property type="entry name" value="S14_ClpP_2"/>
    <property type="match status" value="1"/>
</dbReference>
<dbReference type="FunFam" id="3.90.226.10:FF:000002">
    <property type="entry name" value="ATP-dependent Clp protease proteolytic subunit"/>
    <property type="match status" value="1"/>
</dbReference>
<dbReference type="Gene3D" id="3.90.226.10">
    <property type="entry name" value="2-enoyl-CoA Hydratase, Chain A, domain 1"/>
    <property type="match status" value="1"/>
</dbReference>
<dbReference type="HAMAP" id="MF_00444">
    <property type="entry name" value="ClpP"/>
    <property type="match status" value="1"/>
</dbReference>
<dbReference type="InterPro" id="IPR001907">
    <property type="entry name" value="ClpP"/>
</dbReference>
<dbReference type="InterPro" id="IPR029045">
    <property type="entry name" value="ClpP/crotonase-like_dom_sf"/>
</dbReference>
<dbReference type="InterPro" id="IPR023562">
    <property type="entry name" value="ClpP/TepA"/>
</dbReference>
<dbReference type="InterPro" id="IPR033135">
    <property type="entry name" value="ClpP_His_AS"/>
</dbReference>
<dbReference type="InterPro" id="IPR018215">
    <property type="entry name" value="ClpP_Ser_AS"/>
</dbReference>
<dbReference type="NCBIfam" id="NF001368">
    <property type="entry name" value="PRK00277.1"/>
    <property type="match status" value="1"/>
</dbReference>
<dbReference type="NCBIfam" id="NF009205">
    <property type="entry name" value="PRK12553.1"/>
    <property type="match status" value="1"/>
</dbReference>
<dbReference type="PANTHER" id="PTHR10381">
    <property type="entry name" value="ATP-DEPENDENT CLP PROTEASE PROTEOLYTIC SUBUNIT"/>
    <property type="match status" value="1"/>
</dbReference>
<dbReference type="PANTHER" id="PTHR10381:SF26">
    <property type="entry name" value="ATP-DEPENDENT CLP PROTEASE PROTEOLYTIC SUBUNIT-LIKE-RELATED"/>
    <property type="match status" value="1"/>
</dbReference>
<dbReference type="Pfam" id="PF00574">
    <property type="entry name" value="CLP_protease"/>
    <property type="match status" value="1"/>
</dbReference>
<dbReference type="PRINTS" id="PR00127">
    <property type="entry name" value="CLPPROTEASEP"/>
</dbReference>
<dbReference type="SUPFAM" id="SSF52096">
    <property type="entry name" value="ClpP/crotonase"/>
    <property type="match status" value="1"/>
</dbReference>
<dbReference type="PROSITE" id="PS00382">
    <property type="entry name" value="CLP_PROTEASE_HIS"/>
    <property type="match status" value="1"/>
</dbReference>
<dbReference type="PROSITE" id="PS00381">
    <property type="entry name" value="CLP_PROTEASE_SER"/>
    <property type="match status" value="1"/>
</dbReference>
<comment type="function">
    <text evidence="1">Cleaves peptides in various proteins in a process that requires ATP hydrolysis. Has a chymotrypsin-like activity. Plays a major role in the degradation of misfolded proteins.</text>
</comment>
<comment type="catalytic activity">
    <reaction evidence="1">
        <text>Hydrolysis of proteins to small peptides in the presence of ATP and magnesium. alpha-casein is the usual test substrate. In the absence of ATP, only oligopeptides shorter than five residues are hydrolyzed (such as succinyl-Leu-Tyr-|-NHMec, and Leu-Tyr-Leu-|-Tyr-Trp, in which cleavage of the -Tyr-|-Leu- and -Tyr-|-Trp bonds also occurs).</text>
        <dbReference type="EC" id="3.4.21.92"/>
    </reaction>
</comment>
<comment type="subunit">
    <text evidence="1">Fourteen ClpP subunits assemble into 2 heptameric rings which stack back to back to give a disk-like structure with a central cavity, resembling the structure of eukaryotic proteasomes.</text>
</comment>
<comment type="subcellular location">
    <subcellularLocation>
        <location evidence="1">Cytoplasm</location>
    </subcellularLocation>
</comment>
<comment type="similarity">
    <text evidence="1">Belongs to the peptidase S14 family.</text>
</comment>
<evidence type="ECO:0000255" key="1">
    <source>
        <dbReference type="HAMAP-Rule" id="MF_00444"/>
    </source>
</evidence>
<feature type="chain" id="PRO_0000179662" description="ATP-dependent Clp protease proteolytic subunit 4">
    <location>
        <begin position="1"/>
        <end position="226"/>
    </location>
</feature>
<feature type="active site" description="Nucleophile" evidence="1">
    <location>
        <position position="122"/>
    </location>
</feature>
<feature type="active site" evidence="1">
    <location>
        <position position="147"/>
    </location>
</feature>
<accession>Q82CA5</accession>
<sequence>MNDYPGSGLHARTQAEYTGARAESRYVIPRFVERTSQGVREYDPYAKLFEERVIFLGVQIDDASANDVMAQLLCLESMDPDRDISVYINSPGGSFTALTAIYDTMQFVKPDIQTVCMGQAASAAAILLAAGTPGKRMALPNARVLIHQPYSETGRGQVSDLEIAANEILRMRSQLEDMLAKHSTTPIEKIREDIERDKILTAEDALAYGLIDQIISTRKMNNSAVA</sequence>